<sequence>MDPSALQNMDRDALKKQIENMKYQANMERWPLSKSIAEMRSFVEENEKNDPLINAPDKKNNPWAEKGKCVIM</sequence>
<evidence type="ECO:0000250" key="1"/>
<evidence type="ECO:0000250" key="2">
    <source>
        <dbReference type="UniProtKB" id="Q9NFZ3"/>
    </source>
</evidence>
<evidence type="ECO:0000269" key="3">
    <source>
    </source>
</evidence>
<evidence type="ECO:0000303" key="4">
    <source>
    </source>
</evidence>
<evidence type="ECO:0000305" key="5"/>
<dbReference type="EMBL" id="AJ250441">
    <property type="protein sequence ID" value="CAB70092.1"/>
    <property type="molecule type" value="mRNA"/>
</dbReference>
<dbReference type="SMR" id="Q9NFZ2"/>
<dbReference type="GO" id="GO:0030424">
    <property type="term" value="C:axon"/>
    <property type="evidence" value="ECO:0007669"/>
    <property type="project" value="UniProtKB-SubCell"/>
</dbReference>
<dbReference type="GO" id="GO:0005737">
    <property type="term" value="C:cytoplasm"/>
    <property type="evidence" value="ECO:0007669"/>
    <property type="project" value="UniProtKB-SubCell"/>
</dbReference>
<dbReference type="GO" id="GO:0005834">
    <property type="term" value="C:heterotrimeric G-protein complex"/>
    <property type="evidence" value="ECO:0007669"/>
    <property type="project" value="InterPro"/>
</dbReference>
<dbReference type="GO" id="GO:0016028">
    <property type="term" value="C:rhabdomere"/>
    <property type="evidence" value="ECO:0007669"/>
    <property type="project" value="UniProtKB-SubCell"/>
</dbReference>
<dbReference type="GO" id="GO:0031681">
    <property type="term" value="F:G-protein beta-subunit binding"/>
    <property type="evidence" value="ECO:0007669"/>
    <property type="project" value="InterPro"/>
</dbReference>
<dbReference type="GO" id="GO:0007200">
    <property type="term" value="P:phospholipase C-activating G protein-coupled receptor signaling pathway"/>
    <property type="evidence" value="ECO:0007669"/>
    <property type="project" value="InterPro"/>
</dbReference>
<dbReference type="GO" id="GO:0050909">
    <property type="term" value="P:sensory perception of taste"/>
    <property type="evidence" value="ECO:0007669"/>
    <property type="project" value="InterPro"/>
</dbReference>
<dbReference type="GO" id="GO:0007601">
    <property type="term" value="P:visual perception"/>
    <property type="evidence" value="ECO:0007669"/>
    <property type="project" value="UniProtKB-KW"/>
</dbReference>
<dbReference type="CDD" id="cd00068">
    <property type="entry name" value="GGL"/>
    <property type="match status" value="1"/>
</dbReference>
<dbReference type="FunFam" id="4.10.260.10:FF:000006">
    <property type="entry name" value="Guanine nucleotide-binding protein subunit gamma"/>
    <property type="match status" value="1"/>
</dbReference>
<dbReference type="Gene3D" id="4.10.260.10">
    <property type="entry name" value="Transducin (heterotrimeric G protein), gamma chain"/>
    <property type="match status" value="1"/>
</dbReference>
<dbReference type="InterPro" id="IPR015898">
    <property type="entry name" value="G-protein_gamma-like_dom"/>
</dbReference>
<dbReference type="InterPro" id="IPR036284">
    <property type="entry name" value="GGL_sf"/>
</dbReference>
<dbReference type="InterPro" id="IPR039227">
    <property type="entry name" value="GNG13"/>
</dbReference>
<dbReference type="InterPro" id="IPR001770">
    <property type="entry name" value="Gprotein-gamma"/>
</dbReference>
<dbReference type="PANTHER" id="PTHR15936">
    <property type="entry name" value="GUANINE NUCLEOTIDE-BINDING PROTEIN G I /G S /G O GAMMA-13 SUBUNIT"/>
    <property type="match status" value="1"/>
</dbReference>
<dbReference type="PANTHER" id="PTHR15936:SF2">
    <property type="entry name" value="GUANINE NUCLEOTIDE-BINDING PROTEIN G(I)_G(S)_G(O) SUBUNIT GAMMA-13"/>
    <property type="match status" value="1"/>
</dbReference>
<dbReference type="Pfam" id="PF00631">
    <property type="entry name" value="G-gamma"/>
    <property type="match status" value="1"/>
</dbReference>
<dbReference type="PRINTS" id="PR00321">
    <property type="entry name" value="GPROTEING"/>
</dbReference>
<dbReference type="SMART" id="SM01224">
    <property type="entry name" value="G_gamma"/>
    <property type="match status" value="1"/>
</dbReference>
<dbReference type="SMART" id="SM00224">
    <property type="entry name" value="GGL"/>
    <property type="match status" value="1"/>
</dbReference>
<dbReference type="SUPFAM" id="SSF48670">
    <property type="entry name" value="Transducin (heterotrimeric G protein), gamma chain"/>
    <property type="match status" value="1"/>
</dbReference>
<dbReference type="PROSITE" id="PS50058">
    <property type="entry name" value="G_PROTEIN_GAMMA"/>
    <property type="match status" value="1"/>
</dbReference>
<feature type="initiator methionine" description="Removed" evidence="1">
    <location>
        <position position="1"/>
    </location>
</feature>
<feature type="chain" id="PRO_0000012681" description="Guanine nucleotide-binding protein subunit gamma-e">
    <location>
        <begin position="2"/>
        <end position="69"/>
    </location>
</feature>
<feature type="propeptide" id="PRO_0000012682" description="Removed in mature form" evidence="1">
    <location>
        <begin position="70"/>
        <end position="72"/>
    </location>
</feature>
<feature type="modified residue" description="N-acetylaspartate" evidence="1">
    <location>
        <position position="2"/>
    </location>
</feature>
<feature type="modified residue" description="Cysteine methyl ester" evidence="1">
    <location>
        <position position="69"/>
    </location>
</feature>
<feature type="lipid moiety-binding region" description="S-farnesyl cysteine" evidence="1">
    <location>
        <position position="69"/>
    </location>
</feature>
<gene>
    <name evidence="4" type="primary">Ggammae</name>
</gene>
<proteinExistence type="evidence at protein level"/>
<reference key="1">
    <citation type="journal article" date="1999" name="J. Biol. Chem.">
        <title>A novel Ggamma isolated from Drosophila constitutes a visual G protein gamma subunit of the fly compound eye.</title>
        <authorList>
            <person name="Schulz S."/>
            <person name="Huber A."/>
            <person name="Schwab K."/>
            <person name="Paulsen R."/>
        </authorList>
    </citation>
    <scope>NUCLEOTIDE SEQUENCE [MRNA]</scope>
    <scope>INTERACTION WITH GBETAE</scope>
    <source>
        <tissue>Eye</tissue>
    </source>
</reference>
<organism>
    <name type="scientific">Calliphora vicina</name>
    <name type="common">Blue blowfly</name>
    <name type="synonym">Calliphora erythrocephala</name>
    <dbReference type="NCBI Taxonomy" id="7373"/>
    <lineage>
        <taxon>Eukaryota</taxon>
        <taxon>Metazoa</taxon>
        <taxon>Ecdysozoa</taxon>
        <taxon>Arthropoda</taxon>
        <taxon>Hexapoda</taxon>
        <taxon>Insecta</taxon>
        <taxon>Pterygota</taxon>
        <taxon>Neoptera</taxon>
        <taxon>Endopterygota</taxon>
        <taxon>Diptera</taxon>
        <taxon>Brachycera</taxon>
        <taxon>Muscomorpha</taxon>
        <taxon>Oestroidea</taxon>
        <taxon>Calliphoridae</taxon>
        <taxon>Calliphorinae</taxon>
        <taxon>Calliphora</taxon>
    </lineage>
</organism>
<accession>Q9NFZ2</accession>
<comment type="function">
    <text>Guanine nucleotide-binding proteins (G proteins) are involved as a modulator or transducer in various transmembrane signaling systems. The beta and gamma chains are required for the GTPase activity, for replacement of GDP by GTP, and for G protein-effector interaction. This subunit functions in visual transduction in the compound eye.</text>
</comment>
<comment type="subunit">
    <text evidence="3">G proteins are composed of 3 units, alpha, beta and gamma. Interacts with Gbetae/Guanine nucleotide-binding protein subunit beta-2 (PubMed:10608815).</text>
</comment>
<comment type="subcellular location">
    <subcellularLocation>
        <location evidence="5">Cell membrane</location>
        <topology evidence="5">Lipid-anchor</topology>
        <orientation evidence="5">Cytoplasmic side</orientation>
    </subcellularLocation>
    <subcellularLocation>
        <location evidence="2">Cytoplasm</location>
    </subcellularLocation>
    <subcellularLocation>
        <location evidence="2">Cell projection</location>
        <location evidence="2">Axon</location>
    </subcellularLocation>
    <subcellularLocation>
        <location evidence="2">Cell projection</location>
        <location evidence="2">Rhabdomere</location>
    </subcellularLocation>
</comment>
<comment type="similarity">
    <text evidence="5">Belongs to the G protein gamma family.</text>
</comment>
<protein>
    <recommendedName>
        <fullName>Guanine nucleotide-binding protein subunit gamma-e</fullName>
    </recommendedName>
</protein>
<name>GBGE_CALVI</name>
<keyword id="KW-0007">Acetylation</keyword>
<keyword id="KW-1003">Cell membrane</keyword>
<keyword id="KW-0966">Cell projection</keyword>
<keyword id="KW-0963">Cytoplasm</keyword>
<keyword id="KW-0449">Lipoprotein</keyword>
<keyword id="KW-0472">Membrane</keyword>
<keyword id="KW-0488">Methylation</keyword>
<keyword id="KW-0636">Prenylation</keyword>
<keyword id="KW-0716">Sensory transduction</keyword>
<keyword id="KW-0807">Transducer</keyword>
<keyword id="KW-0844">Vision</keyword>